<reference key="1">
    <citation type="journal article" date="1998" name="Science">
        <title>Genome sequence of the nematode C. elegans: a platform for investigating biology.</title>
        <authorList>
            <consortium name="The C. elegans sequencing consortium"/>
        </authorList>
    </citation>
    <scope>NUCLEOTIDE SEQUENCE [LARGE SCALE GENOMIC DNA]</scope>
    <source>
        <strain>Bristol N2</strain>
    </source>
</reference>
<organism>
    <name type="scientific">Caenorhabditis elegans</name>
    <dbReference type="NCBI Taxonomy" id="6239"/>
    <lineage>
        <taxon>Eukaryota</taxon>
        <taxon>Metazoa</taxon>
        <taxon>Ecdysozoa</taxon>
        <taxon>Nematoda</taxon>
        <taxon>Chromadorea</taxon>
        <taxon>Rhabditida</taxon>
        <taxon>Rhabditina</taxon>
        <taxon>Rhabditomorpha</taxon>
        <taxon>Rhabditoidea</taxon>
        <taxon>Rhabditidae</taxon>
        <taxon>Peloderinae</taxon>
        <taxon>Caenorhabditis</taxon>
    </lineage>
</organism>
<keyword id="KW-1015">Disulfide bond</keyword>
<keyword id="KW-0378">Hydrolase</keyword>
<keyword id="KW-1185">Reference proteome</keyword>
<dbReference type="EC" id="3.1.3.2"/>
<dbReference type="EMBL" id="Z48178">
    <property type="protein sequence ID" value="CAA88204.2"/>
    <property type="molecule type" value="Genomic_DNA"/>
</dbReference>
<dbReference type="PIR" id="T18944">
    <property type="entry name" value="T18944"/>
</dbReference>
<dbReference type="RefSeq" id="NP_496140.2">
    <property type="nucleotide sequence ID" value="NM_063739.2"/>
</dbReference>
<dbReference type="SMR" id="Q09448"/>
<dbReference type="FunCoup" id="Q09448">
    <property type="interactions" value="107"/>
</dbReference>
<dbReference type="STRING" id="6239.C05C10.1.1"/>
<dbReference type="PaxDb" id="6239-C05C10.1"/>
<dbReference type="EnsemblMetazoa" id="C05C10.1.1">
    <property type="protein sequence ID" value="C05C10.1.1"/>
    <property type="gene ID" value="WBGene00007328"/>
</dbReference>
<dbReference type="GeneID" id="182251"/>
<dbReference type="KEGG" id="cel:CELE_C05C10.1"/>
<dbReference type="UCSC" id="C05C10.1">
    <property type="organism name" value="c. elegans"/>
</dbReference>
<dbReference type="AGR" id="WB:WBGene00007328"/>
<dbReference type="CTD" id="182251"/>
<dbReference type="WormBase" id="C05C10.1">
    <property type="protein sequence ID" value="CE42840"/>
    <property type="gene ID" value="WBGene00007328"/>
    <property type="gene designation" value="pho-10"/>
</dbReference>
<dbReference type="eggNOG" id="KOG3720">
    <property type="taxonomic scope" value="Eukaryota"/>
</dbReference>
<dbReference type="GeneTree" id="ENSGT00940000168803"/>
<dbReference type="HOGENOM" id="CLU_030431_2_0_1"/>
<dbReference type="InParanoid" id="Q09448"/>
<dbReference type="OrthoDB" id="258392at2759"/>
<dbReference type="PhylomeDB" id="Q09448"/>
<dbReference type="Reactome" id="R-CEL-6798695">
    <property type="pathway name" value="Neutrophil degranulation"/>
</dbReference>
<dbReference type="PRO" id="PR:Q09448"/>
<dbReference type="Proteomes" id="UP000001940">
    <property type="component" value="Chromosome II"/>
</dbReference>
<dbReference type="Bgee" id="WBGene00007328">
    <property type="expression patterns" value="Expressed in embryo and 1 other cell type or tissue"/>
</dbReference>
<dbReference type="GO" id="GO:0003993">
    <property type="term" value="F:acid phosphatase activity"/>
    <property type="evidence" value="ECO:0007669"/>
    <property type="project" value="UniProtKB-EC"/>
</dbReference>
<dbReference type="GO" id="GO:0016791">
    <property type="term" value="F:phosphatase activity"/>
    <property type="evidence" value="ECO:0000318"/>
    <property type="project" value="GO_Central"/>
</dbReference>
<dbReference type="CDD" id="cd07061">
    <property type="entry name" value="HP_HAP_like"/>
    <property type="match status" value="1"/>
</dbReference>
<dbReference type="Gene3D" id="3.40.50.1240">
    <property type="entry name" value="Phosphoglycerate mutase-like"/>
    <property type="match status" value="1"/>
</dbReference>
<dbReference type="InterPro" id="IPR033379">
    <property type="entry name" value="Acid_Pase_AS"/>
</dbReference>
<dbReference type="InterPro" id="IPR000560">
    <property type="entry name" value="His_Pase_clade-2"/>
</dbReference>
<dbReference type="InterPro" id="IPR029033">
    <property type="entry name" value="His_PPase_superfam"/>
</dbReference>
<dbReference type="InterPro" id="IPR050645">
    <property type="entry name" value="Histidine_acid_phosphatase"/>
</dbReference>
<dbReference type="PANTHER" id="PTHR11567:SF181">
    <property type="entry name" value="ACID PHOSPHATASE 10-RELATED"/>
    <property type="match status" value="1"/>
</dbReference>
<dbReference type="PANTHER" id="PTHR11567">
    <property type="entry name" value="ACID PHOSPHATASE-RELATED"/>
    <property type="match status" value="1"/>
</dbReference>
<dbReference type="Pfam" id="PF00328">
    <property type="entry name" value="His_Phos_2"/>
    <property type="match status" value="1"/>
</dbReference>
<dbReference type="SUPFAM" id="SSF53254">
    <property type="entry name" value="Phosphoglycerate mutase-like"/>
    <property type="match status" value="1"/>
</dbReference>
<dbReference type="PROSITE" id="PS00616">
    <property type="entry name" value="HIS_ACID_PHOSPHAT_1"/>
    <property type="match status" value="1"/>
</dbReference>
<dbReference type="PROSITE" id="PS00778">
    <property type="entry name" value="HIS_ACID_PHOSPHAT_2"/>
    <property type="match status" value="1"/>
</dbReference>
<comment type="catalytic activity">
    <reaction>
        <text>a phosphate monoester + H2O = an alcohol + phosphate</text>
        <dbReference type="Rhea" id="RHEA:15017"/>
        <dbReference type="ChEBI" id="CHEBI:15377"/>
        <dbReference type="ChEBI" id="CHEBI:30879"/>
        <dbReference type="ChEBI" id="CHEBI:43474"/>
        <dbReference type="ChEBI" id="CHEBI:67140"/>
        <dbReference type="EC" id="3.1.3.2"/>
    </reaction>
</comment>
<comment type="similarity">
    <text evidence="2">Belongs to the histidine acid phosphatase family.</text>
</comment>
<proteinExistence type="inferred from homology"/>
<accession>Q09448</accession>
<feature type="chain" id="PRO_0000114468" description="Putative acid phosphatase 10">
    <location>
        <begin position="1"/>
        <end position="411"/>
    </location>
</feature>
<feature type="active site" description="Nucleophile" evidence="1">
    <location>
        <position position="33"/>
    </location>
</feature>
<feature type="active site" description="Proton donor" evidence="1">
    <location>
        <position position="313"/>
    </location>
</feature>
<feature type="disulfide bond" evidence="1">
    <location>
        <begin position="379"/>
        <end position="385"/>
    </location>
</feature>
<name>PHO10_CAEEL</name>
<gene>
    <name type="primary">pho-10</name>
    <name type="ORF">C05C10.1</name>
</gene>
<protein>
    <recommendedName>
        <fullName>Putative acid phosphatase 10</fullName>
        <ecNumber>3.1.3.2</ecNumber>
    </recommendedName>
</protein>
<evidence type="ECO:0000250" key="1"/>
<evidence type="ECO:0000305" key="2"/>
<sequence length="411" mass="46600">MFLSLFCVIIVAVGCSSKDGNVKLEFVQAMWRHGERSALADLYPIYEKDWVFGGGGLGELTGRGMGEMNNLGRLIRERYVRKFNFLEPKYASKEVYFRSTNLNRTIISAMSLLYGLFPPSLYDIPNVDYPFTPLKWLPGLAFVPVHVDGSDQCAASQNCPCPRYDFLQQQMLTLPEVQQAFQQVILLNRQIAPLYNVTTGVDTFYVYPDTWKCQRAYFNKTMYDKLPWYNEQLYSKAEITYAPIKGFLEGSFSQPAVTSNGLDVAFEIQQVRSGVMINEIVSRASEKLNCVERGQNCTSYLNKLKFYGYSIHDNNVYAVLVALGIPHISATEDGWPSYAAAIFFEFYRNSQTNKRLFKVLYRQDASSQITDVTSQVPMCQGVSMCPLSTFQHLADVLKPIPDINTVCNITS</sequence>